<sequence length="745" mass="87864">MQRDYLIRVETESMPDFKRLNGLMIGFVIKGEAHIYDENNMTQCNSGDIFIINHRDLYRFQLQQDGIICYIQFQMKYLADKFDDAHCLYFHLTDATTTKNIHQLRNIMARLVSTHIRHNELSKLTEQQLVIQLLMHMIHYVPRTYHSNQSILNDDKVNQVCDYIELHFHEDLSLSELSEYVGWSESHLSKKFTESLGVGFQHFLNTTRIEHAKLDLTYTDETITDIALQNGFSSAASFARTFKHFTHQTPKQYRGDRPAITENQQSAQHNYHDRELILLLNDYIEEMNHFIEDIEKMNYKEIAFKPTNQQLNQFNHIIQVGYLRNLLNTQYQSQLLTCHHDFQVNEVLAYDVMPYIMKKLNAPFTYDAEISNIFYDIDLCLDFLLDHNFSLTMHLNQYDSRDYIDAFKVFIHHVALHVSHRKDLKFNLYVTTLHNALIEMIDYFKALFPNGGLYIHLDQATERHLPLLKRLEPHIDHFVFDANSNDAVDFNKMNDDEFKTASQMIINKTNYFIDLIHRHNLKRPLILLNWNTLTGDTFITNGEYFRGGIIIEQLLKLSSKVEGIGYWLNYDLHVSHCKNERDYMNSIELFHQYNGKRPVYFTALLFNKLTSNILYSDDTCIVTGTDSNFQILLYDAKHFNPYLALDNQMNMRATEMIHLNINALEEGMYKIKHFTLDKENGALFNLWRKHHTIHGMDKDSIDYVNRMSFPKLEVYDIDITDTLALNIKMITNGIHLIEVKRYPSS</sequence>
<organism>
    <name type="scientific">Staphylococcus aureus (strain MW2)</name>
    <dbReference type="NCBI Taxonomy" id="196620"/>
    <lineage>
        <taxon>Bacteria</taxon>
        <taxon>Bacillati</taxon>
        <taxon>Bacillota</taxon>
        <taxon>Bacilli</taxon>
        <taxon>Bacillales</taxon>
        <taxon>Staphylococcaceae</taxon>
        <taxon>Staphylococcus</taxon>
    </lineage>
</organism>
<feature type="chain" id="PRO_0000194633" description="Uncharacterized HTH-type transcriptional regulator MW0077">
    <location>
        <begin position="1"/>
        <end position="745"/>
    </location>
</feature>
<feature type="domain" description="HTH araC/xylS-type" evidence="1">
    <location>
        <begin position="158"/>
        <end position="256"/>
    </location>
</feature>
<feature type="DNA-binding region" description="H-T-H motif" evidence="1">
    <location>
        <begin position="175"/>
        <end position="196"/>
    </location>
</feature>
<feature type="DNA-binding region" description="H-T-H motif" evidence="1">
    <location>
        <begin position="223"/>
        <end position="246"/>
    </location>
</feature>
<evidence type="ECO:0000255" key="1">
    <source>
        <dbReference type="PROSITE-ProRule" id="PRU00593"/>
    </source>
</evidence>
<keyword id="KW-0238">DNA-binding</keyword>
<keyword id="KW-0677">Repeat</keyword>
<keyword id="KW-0804">Transcription</keyword>
<keyword id="KW-0805">Transcription regulation</keyword>
<gene>
    <name type="ordered locus">MW0077</name>
</gene>
<protein>
    <recommendedName>
        <fullName>Uncharacterized HTH-type transcriptional regulator MW0077</fullName>
    </recommendedName>
</protein>
<proteinExistence type="predicted"/>
<reference key="1">
    <citation type="journal article" date="2002" name="Lancet">
        <title>Genome and virulence determinants of high virulence community-acquired MRSA.</title>
        <authorList>
            <person name="Baba T."/>
            <person name="Takeuchi F."/>
            <person name="Kuroda M."/>
            <person name="Yuzawa H."/>
            <person name="Aoki K."/>
            <person name="Oguchi A."/>
            <person name="Nagai Y."/>
            <person name="Iwama N."/>
            <person name="Asano K."/>
            <person name="Naimi T."/>
            <person name="Kuroda H."/>
            <person name="Cui L."/>
            <person name="Yamamoto K."/>
            <person name="Hiramatsu K."/>
        </authorList>
    </citation>
    <scope>NUCLEOTIDE SEQUENCE [LARGE SCALE GENOMIC DNA]</scope>
    <source>
        <strain>MW2</strain>
    </source>
</reference>
<name>Y077_STAAW</name>
<dbReference type="EMBL" id="BA000033">
    <property type="protein sequence ID" value="BAB93942.1"/>
    <property type="molecule type" value="Genomic_DNA"/>
</dbReference>
<dbReference type="SMR" id="Q8NYT6"/>
<dbReference type="KEGG" id="sam:MW0077"/>
<dbReference type="HOGENOM" id="CLU_017624_1_0_9"/>
<dbReference type="GO" id="GO:0003700">
    <property type="term" value="F:DNA-binding transcription factor activity"/>
    <property type="evidence" value="ECO:0007669"/>
    <property type="project" value="InterPro"/>
</dbReference>
<dbReference type="GO" id="GO:0043565">
    <property type="term" value="F:sequence-specific DNA binding"/>
    <property type="evidence" value="ECO:0007669"/>
    <property type="project" value="InterPro"/>
</dbReference>
<dbReference type="Gene3D" id="3.20.20.80">
    <property type="entry name" value="Glycosidases"/>
    <property type="match status" value="1"/>
</dbReference>
<dbReference type="Gene3D" id="2.60.40.1500">
    <property type="entry name" value="Glycosyl hydrolase domain, family 39"/>
    <property type="match status" value="1"/>
</dbReference>
<dbReference type="Gene3D" id="1.10.10.60">
    <property type="entry name" value="Homeodomain-like"/>
    <property type="match status" value="2"/>
</dbReference>
<dbReference type="InterPro" id="IPR017853">
    <property type="entry name" value="Glycoside_hydrolase_SF"/>
</dbReference>
<dbReference type="InterPro" id="IPR009057">
    <property type="entry name" value="Homeodomain-like_sf"/>
</dbReference>
<dbReference type="InterPro" id="IPR037923">
    <property type="entry name" value="HTH-like"/>
</dbReference>
<dbReference type="InterPro" id="IPR018060">
    <property type="entry name" value="HTH_AraC"/>
</dbReference>
<dbReference type="InterPro" id="IPR020449">
    <property type="entry name" value="Tscrpt_reg_AraC-type_HTH"/>
</dbReference>
<dbReference type="NCBIfam" id="NF047455">
    <property type="entry name" value="TF_Staph_AryK"/>
    <property type="match status" value="1"/>
</dbReference>
<dbReference type="PANTHER" id="PTHR43280">
    <property type="entry name" value="ARAC-FAMILY TRANSCRIPTIONAL REGULATOR"/>
    <property type="match status" value="1"/>
</dbReference>
<dbReference type="PANTHER" id="PTHR43280:SF28">
    <property type="entry name" value="HTH-TYPE TRANSCRIPTIONAL ACTIVATOR RHAS"/>
    <property type="match status" value="1"/>
</dbReference>
<dbReference type="Pfam" id="PF12833">
    <property type="entry name" value="HTH_18"/>
    <property type="match status" value="1"/>
</dbReference>
<dbReference type="PRINTS" id="PR00032">
    <property type="entry name" value="HTHARAC"/>
</dbReference>
<dbReference type="SMART" id="SM00342">
    <property type="entry name" value="HTH_ARAC"/>
    <property type="match status" value="1"/>
</dbReference>
<dbReference type="SUPFAM" id="SSF51445">
    <property type="entry name" value="(Trans)glycosidases"/>
    <property type="match status" value="1"/>
</dbReference>
<dbReference type="SUPFAM" id="SSF51011">
    <property type="entry name" value="Glycosyl hydrolase domain"/>
    <property type="match status" value="1"/>
</dbReference>
<dbReference type="SUPFAM" id="SSF46689">
    <property type="entry name" value="Homeodomain-like"/>
    <property type="match status" value="2"/>
</dbReference>
<dbReference type="SUPFAM" id="SSF51215">
    <property type="entry name" value="Regulatory protein AraC"/>
    <property type="match status" value="1"/>
</dbReference>
<dbReference type="PROSITE" id="PS01124">
    <property type="entry name" value="HTH_ARAC_FAMILY_2"/>
    <property type="match status" value="1"/>
</dbReference>
<accession>Q8NYT6</accession>